<comment type="function">
    <text evidence="4">In association with WRKY72A, contributes to basal defense against root-knot nematodes (RKNs) and potato aphids, as well as Mi-1-mediated gene-for-gene resistance to these pests (PubMed:20409007). Both WRKY72A and WRKY72B are not required for gene-for-gene resistance mediated by Pto, another tomato R gene (PubMed:20409007).</text>
</comment>
<comment type="subcellular location">
    <subcellularLocation>
        <location evidence="2">Nucleus</location>
    </subcellularLocation>
</comment>
<comment type="induction">
    <text evidence="4">Induced by infection with the root-knot nematode (RKN) Meloidogyne incognita and potato aphids.</text>
</comment>
<comment type="miscellaneous">
    <text evidence="4">Plants silencing WRKY72A show a reduction of the R gene Mi-1-mediated resistance as well as basal defense against root-knot nematodes (RKNs) and potato aphids.</text>
</comment>
<comment type="similarity">
    <text evidence="6">Belongs to the WRKY group II-b family.</text>
</comment>
<proteinExistence type="evidence at transcript level"/>
<gene>
    <name evidence="5" type="primary">WRKY72B</name>
    <name evidence="6" type="ordered locus">Solyc06g070990</name>
</gene>
<organism>
    <name type="scientific">Solanum lycopersicum</name>
    <name type="common">Tomato</name>
    <name type="synonym">Lycopersicon esculentum</name>
    <dbReference type="NCBI Taxonomy" id="4081"/>
    <lineage>
        <taxon>Eukaryota</taxon>
        <taxon>Viridiplantae</taxon>
        <taxon>Streptophyta</taxon>
        <taxon>Embryophyta</taxon>
        <taxon>Tracheophyta</taxon>
        <taxon>Spermatophyta</taxon>
        <taxon>Magnoliopsida</taxon>
        <taxon>eudicotyledons</taxon>
        <taxon>Gunneridae</taxon>
        <taxon>Pentapetalae</taxon>
        <taxon>asterids</taxon>
        <taxon>lamiids</taxon>
        <taxon>Solanales</taxon>
        <taxon>Solanaceae</taxon>
        <taxon>Solanoideae</taxon>
        <taxon>Solaneae</taxon>
        <taxon>Solanum</taxon>
        <taxon>Solanum subgen. Lycopersicon</taxon>
    </lineage>
</organism>
<name>WK72B_SOLLC</name>
<keyword id="KW-0175">Coiled coil</keyword>
<keyword id="KW-0238">DNA-binding</keyword>
<keyword id="KW-0539">Nucleus</keyword>
<keyword id="KW-0611">Plant defense</keyword>
<keyword id="KW-1185">Reference proteome</keyword>
<keyword id="KW-0804">Transcription</keyword>
<keyword id="KW-0805">Transcription regulation</keyword>
<protein>
    <recommendedName>
        <fullName evidence="6">WRKY transcription factor 72B</fullName>
        <shortName evidence="5">SlWRKY72b</shortName>
    </recommendedName>
    <alternativeName>
        <fullName evidence="6">WRKY DNA-binding protein 72B</fullName>
    </alternativeName>
</protein>
<reference key="1">
    <citation type="journal article" date="2010" name="Plant J.">
        <title>WRKY72-type transcription factors contribute to basal immunity in tomato and Arabidopsis as well as gene-for-gene resistance mediated by the tomato R gene Mi-1.</title>
        <authorList>
            <person name="Bhattarai K.K."/>
            <person name="Atamian H.S."/>
            <person name="Kaloshian I."/>
            <person name="Eulgem T."/>
        </authorList>
    </citation>
    <scope>NUCLEOTIDE SEQUENCE [MRNA]</scope>
    <scope>FUNCTION</scope>
    <scope>INDUCTION</scope>
</reference>
<reference key="2">
    <citation type="journal article" date="2012" name="Nature">
        <title>The tomato genome sequence provides insights into fleshy fruit evolution.</title>
        <authorList>
            <consortium name="Tomato Genome Consortium"/>
        </authorList>
    </citation>
    <scope>NUCLEOTIDE SEQUENCE [LARGE SCALE GENOMIC DNA]</scope>
    <source>
        <strain>cv. Heinz 1706</strain>
    </source>
</reference>
<dbReference type="EMBL" id="GU017422">
    <property type="protein sequence ID" value="ADK23850.1"/>
    <property type="molecule type" value="mRNA"/>
</dbReference>
<dbReference type="EMBL" id="CM001069">
    <property type="status" value="NOT_ANNOTATED_CDS"/>
    <property type="molecule type" value="Genomic_DNA"/>
</dbReference>
<dbReference type="RefSeq" id="NP_001234773.1">
    <property type="nucleotide sequence ID" value="NM_001247844.1"/>
</dbReference>
<dbReference type="SMR" id="D8VNC6"/>
<dbReference type="STRING" id="4081.D8VNC6"/>
<dbReference type="PaxDb" id="4081-Solyc06g070990.2.1"/>
<dbReference type="GeneID" id="100529133"/>
<dbReference type="KEGG" id="sly:100529133"/>
<dbReference type="InParanoid" id="D8VNC6"/>
<dbReference type="OrthoDB" id="1912868at2759"/>
<dbReference type="Proteomes" id="UP000004994">
    <property type="component" value="Unplaced"/>
</dbReference>
<dbReference type="ExpressionAtlas" id="D8VNC6">
    <property type="expression patterns" value="baseline and differential"/>
</dbReference>
<dbReference type="GO" id="GO:0005634">
    <property type="term" value="C:nucleus"/>
    <property type="evidence" value="ECO:0007669"/>
    <property type="project" value="UniProtKB-SubCell"/>
</dbReference>
<dbReference type="GO" id="GO:0003700">
    <property type="term" value="F:DNA-binding transcription factor activity"/>
    <property type="evidence" value="ECO:0007669"/>
    <property type="project" value="InterPro"/>
</dbReference>
<dbReference type="GO" id="GO:0043565">
    <property type="term" value="F:sequence-specific DNA binding"/>
    <property type="evidence" value="ECO:0007669"/>
    <property type="project" value="InterPro"/>
</dbReference>
<dbReference type="GO" id="GO:0006952">
    <property type="term" value="P:defense response"/>
    <property type="evidence" value="ECO:0007669"/>
    <property type="project" value="UniProtKB-KW"/>
</dbReference>
<dbReference type="FunFam" id="2.20.25.80:FF:000002">
    <property type="entry name" value="probable WRKY transcription factor 31"/>
    <property type="match status" value="1"/>
</dbReference>
<dbReference type="Gene3D" id="2.20.25.80">
    <property type="entry name" value="WRKY domain"/>
    <property type="match status" value="1"/>
</dbReference>
<dbReference type="InterPro" id="IPR003657">
    <property type="entry name" value="WRKY_dom"/>
</dbReference>
<dbReference type="InterPro" id="IPR036576">
    <property type="entry name" value="WRKY_dom_sf"/>
</dbReference>
<dbReference type="InterPro" id="IPR044810">
    <property type="entry name" value="WRKY_plant"/>
</dbReference>
<dbReference type="PANTHER" id="PTHR31429">
    <property type="entry name" value="WRKY TRANSCRIPTION FACTOR 36-RELATED"/>
    <property type="match status" value="1"/>
</dbReference>
<dbReference type="PANTHER" id="PTHR31429:SF86">
    <property type="entry name" value="WRKY TRANSCRIPTION FACTOR 61-RELATED"/>
    <property type="match status" value="1"/>
</dbReference>
<dbReference type="Pfam" id="PF03106">
    <property type="entry name" value="WRKY"/>
    <property type="match status" value="1"/>
</dbReference>
<dbReference type="SMART" id="SM00774">
    <property type="entry name" value="WRKY"/>
    <property type="match status" value="1"/>
</dbReference>
<dbReference type="SUPFAM" id="SSF118290">
    <property type="entry name" value="WRKY DNA-binding domain"/>
    <property type="match status" value="1"/>
</dbReference>
<dbReference type="PROSITE" id="PS50811">
    <property type="entry name" value="WRKY"/>
    <property type="match status" value="1"/>
</dbReference>
<accession>D8VNC6</accession>
<accession>A0A3Q7HU41</accession>
<feature type="chain" id="PRO_0000447557" description="WRKY transcription factor 72B">
    <location>
        <begin position="1"/>
        <end position="489"/>
    </location>
</feature>
<feature type="DNA-binding region" description="WRKY" evidence="2">
    <location>
        <begin position="273"/>
        <end position="339"/>
    </location>
</feature>
<feature type="region of interest" description="Disordered" evidence="3">
    <location>
        <begin position="1"/>
        <end position="100"/>
    </location>
</feature>
<feature type="region of interest" description="Disordered" evidence="3">
    <location>
        <begin position="131"/>
        <end position="159"/>
    </location>
</feature>
<feature type="region of interest" description="Disordered" evidence="3">
    <location>
        <begin position="234"/>
        <end position="267"/>
    </location>
</feature>
<feature type="region of interest" description="Disordered" evidence="3">
    <location>
        <begin position="356"/>
        <end position="381"/>
    </location>
</feature>
<feature type="region of interest" description="Disordered" evidence="3">
    <location>
        <begin position="427"/>
        <end position="454"/>
    </location>
</feature>
<feature type="coiled-coil region" evidence="1">
    <location>
        <begin position="84"/>
        <end position="132"/>
    </location>
</feature>
<feature type="compositionally biased region" description="Basic and acidic residues" evidence="3">
    <location>
        <begin position="32"/>
        <end position="52"/>
    </location>
</feature>
<feature type="compositionally biased region" description="Basic and acidic residues" evidence="3">
    <location>
        <begin position="83"/>
        <end position="100"/>
    </location>
</feature>
<feature type="compositionally biased region" description="Low complexity" evidence="3">
    <location>
        <begin position="138"/>
        <end position="147"/>
    </location>
</feature>
<feature type="compositionally biased region" description="Low complexity" evidence="3">
    <location>
        <begin position="371"/>
        <end position="381"/>
    </location>
</feature>
<feature type="compositionally biased region" description="Low complexity" evidence="3">
    <location>
        <begin position="427"/>
        <end position="438"/>
    </location>
</feature>
<sequence length="489" mass="54891">MENKNKAEYYSPDDEDRDIDNQENIIHQFGKGRKEREDDKSKPSSPHHKDYMNIDNIEGGAVNVMVKRERSPPEHNSMASSSTHKEQDDQLASAKDEMREVMEENQRLRMHLDRMMKEYRNLQNQFHDIVQKETDQKSSSTTVNTSTTHHDHESDQEADQLVSLSLGRTTSDMKKDDLSKILKKDKVHDDEGVSNNNKSLDLGLDCKFETTPTECSPVNYSPENSLDDIQANKDENEETSNKNLKTMRNNGDGDDVSQQNPTKRARVSVRVRCDAPTMNDGCQWRKYGQKIAKGNPCPRAYYRCTVAPNCPVRKQVQRCAEDMSILITTYEGTHNHTLPLSATAMASTTSAAASMLLSGSSNSSDPNPQVTATTTTTPTTTTSANINGLNFYLSDTSKHHKSPYYFPNSSISASAPNSLPTITLDLTSTSSSSPSSLSHLNRMTQNFPPRYNYNNNNSTTNLNFSSVLESNSLPISWTNNYPNQTYNKK</sequence>
<evidence type="ECO:0000255" key="1"/>
<evidence type="ECO:0000255" key="2">
    <source>
        <dbReference type="PROSITE-ProRule" id="PRU00223"/>
    </source>
</evidence>
<evidence type="ECO:0000256" key="3">
    <source>
        <dbReference type="SAM" id="MobiDB-lite"/>
    </source>
</evidence>
<evidence type="ECO:0000269" key="4">
    <source>
    </source>
</evidence>
<evidence type="ECO:0000303" key="5">
    <source>
    </source>
</evidence>
<evidence type="ECO:0000305" key="6"/>